<feature type="chain" id="PRO_1000118316" description="Heat-inducible transcription repressor HrcA">
    <location>
        <begin position="1"/>
        <end position="344"/>
    </location>
</feature>
<evidence type="ECO:0000255" key="1">
    <source>
        <dbReference type="HAMAP-Rule" id="MF_00081"/>
    </source>
</evidence>
<sequence>MITERQSNILNLIVDLFTQTHEPVGSKALQSLIASSSATIRNDMAKLEKLGLLEKAHTSSGRMPSAAGFKYFVEHSLNLGSIDEQDLYQLVKAFDFEAFKLEDVLLRASQMLSDTTGYTAAILDVEPARQRLTGFDIVQLSSHDALAVLSLDESKPLTVQFAIPKNFMNRDLLVLKGIVADRLLGKDVMTVHYKLRTEIPQIVQKYFTVTDNVLDLFDYIFVGLFRETIFVSGKVAALDYAGLATYQFLDEEQRLALSIRQSLSEEEMATVQVADSSEPALANVTLLTYKFLIPYRGFGLLSLIGPVDMDYRRSVSLINVIGQLLAVKLRDYYRYLNSNHYEVH</sequence>
<proteinExistence type="inferred from homology"/>
<protein>
    <recommendedName>
        <fullName evidence="1">Heat-inducible transcription repressor HrcA</fullName>
    </recommendedName>
</protein>
<accession>C0M7T7</accession>
<keyword id="KW-0678">Repressor</keyword>
<keyword id="KW-0346">Stress response</keyword>
<keyword id="KW-0804">Transcription</keyword>
<keyword id="KW-0805">Transcription regulation</keyword>
<organism>
    <name type="scientific">Streptococcus equi subsp. equi (strain 4047)</name>
    <dbReference type="NCBI Taxonomy" id="553482"/>
    <lineage>
        <taxon>Bacteria</taxon>
        <taxon>Bacillati</taxon>
        <taxon>Bacillota</taxon>
        <taxon>Bacilli</taxon>
        <taxon>Lactobacillales</taxon>
        <taxon>Streptococcaceae</taxon>
        <taxon>Streptococcus</taxon>
    </lineage>
</organism>
<gene>
    <name evidence="1" type="primary">hrcA</name>
    <name type="ordered locus">SEQ_0472</name>
</gene>
<reference key="1">
    <citation type="journal article" date="2009" name="PLoS Pathog.">
        <title>Genomic evidence for the evolution of Streptococcus equi: host restriction, increased virulence, and genetic exchange with human pathogens.</title>
        <authorList>
            <person name="Holden M.T.G."/>
            <person name="Heather Z."/>
            <person name="Paillot R."/>
            <person name="Steward K.F."/>
            <person name="Webb K."/>
            <person name="Ainslie F."/>
            <person name="Jourdan T."/>
            <person name="Bason N.C."/>
            <person name="Holroyd N.E."/>
            <person name="Mungall K."/>
            <person name="Quail M.A."/>
            <person name="Sanders M."/>
            <person name="Simmonds M."/>
            <person name="Willey D."/>
            <person name="Brooks K."/>
            <person name="Aanensen D.M."/>
            <person name="Spratt B.G."/>
            <person name="Jolley K.A."/>
            <person name="Maiden M.C.J."/>
            <person name="Kehoe M."/>
            <person name="Chanter N."/>
            <person name="Bentley S.D."/>
            <person name="Robinson C."/>
            <person name="Maskell D.J."/>
            <person name="Parkhill J."/>
            <person name="Waller A.S."/>
        </authorList>
    </citation>
    <scope>NUCLEOTIDE SEQUENCE [LARGE SCALE GENOMIC DNA]</scope>
    <source>
        <strain>4047</strain>
    </source>
</reference>
<dbReference type="EMBL" id="FM204883">
    <property type="protein sequence ID" value="CAW92671.1"/>
    <property type="molecule type" value="Genomic_DNA"/>
</dbReference>
<dbReference type="RefSeq" id="WP_012679073.1">
    <property type="nucleotide sequence ID" value="NC_012471.1"/>
</dbReference>
<dbReference type="SMR" id="C0M7T7"/>
<dbReference type="KEGG" id="seu:SEQ_0472"/>
<dbReference type="HOGENOM" id="CLU_050019_1_0_9"/>
<dbReference type="OrthoDB" id="9783139at2"/>
<dbReference type="Proteomes" id="UP000001365">
    <property type="component" value="Chromosome"/>
</dbReference>
<dbReference type="GO" id="GO:0003677">
    <property type="term" value="F:DNA binding"/>
    <property type="evidence" value="ECO:0007669"/>
    <property type="project" value="InterPro"/>
</dbReference>
<dbReference type="GO" id="GO:0045892">
    <property type="term" value="P:negative regulation of DNA-templated transcription"/>
    <property type="evidence" value="ECO:0007669"/>
    <property type="project" value="UniProtKB-UniRule"/>
</dbReference>
<dbReference type="Gene3D" id="3.30.450.40">
    <property type="match status" value="1"/>
</dbReference>
<dbReference type="Gene3D" id="3.30.390.60">
    <property type="entry name" value="Heat-inducible transcription repressor hrca homolog, domain 3"/>
    <property type="match status" value="1"/>
</dbReference>
<dbReference type="Gene3D" id="1.10.10.10">
    <property type="entry name" value="Winged helix-like DNA-binding domain superfamily/Winged helix DNA-binding domain"/>
    <property type="match status" value="1"/>
</dbReference>
<dbReference type="HAMAP" id="MF_00081">
    <property type="entry name" value="HrcA"/>
    <property type="match status" value="1"/>
</dbReference>
<dbReference type="InterPro" id="IPR029016">
    <property type="entry name" value="GAF-like_dom_sf"/>
</dbReference>
<dbReference type="InterPro" id="IPR002571">
    <property type="entry name" value="HrcA"/>
</dbReference>
<dbReference type="InterPro" id="IPR021153">
    <property type="entry name" value="HrcA_C"/>
</dbReference>
<dbReference type="InterPro" id="IPR036388">
    <property type="entry name" value="WH-like_DNA-bd_sf"/>
</dbReference>
<dbReference type="InterPro" id="IPR036390">
    <property type="entry name" value="WH_DNA-bd_sf"/>
</dbReference>
<dbReference type="InterPro" id="IPR005104">
    <property type="entry name" value="WHTH_HrcA_DNA-bd"/>
</dbReference>
<dbReference type="InterPro" id="IPR023120">
    <property type="entry name" value="WHTH_transcript_rep_HrcA_IDD"/>
</dbReference>
<dbReference type="NCBIfam" id="TIGR00331">
    <property type="entry name" value="hrcA"/>
    <property type="match status" value="1"/>
</dbReference>
<dbReference type="PANTHER" id="PTHR34824">
    <property type="entry name" value="HEAT-INDUCIBLE TRANSCRIPTION REPRESSOR HRCA"/>
    <property type="match status" value="1"/>
</dbReference>
<dbReference type="PANTHER" id="PTHR34824:SF1">
    <property type="entry name" value="HEAT-INDUCIBLE TRANSCRIPTION REPRESSOR HRCA"/>
    <property type="match status" value="1"/>
</dbReference>
<dbReference type="Pfam" id="PF01628">
    <property type="entry name" value="HrcA"/>
    <property type="match status" value="1"/>
</dbReference>
<dbReference type="Pfam" id="PF03444">
    <property type="entry name" value="HrcA_DNA-bdg"/>
    <property type="match status" value="1"/>
</dbReference>
<dbReference type="PIRSF" id="PIRSF005485">
    <property type="entry name" value="HrcA"/>
    <property type="match status" value="1"/>
</dbReference>
<dbReference type="SUPFAM" id="SSF55781">
    <property type="entry name" value="GAF domain-like"/>
    <property type="match status" value="1"/>
</dbReference>
<dbReference type="SUPFAM" id="SSF46785">
    <property type="entry name" value="Winged helix' DNA-binding domain"/>
    <property type="match status" value="1"/>
</dbReference>
<name>HRCA_STRE4</name>
<comment type="function">
    <text evidence="1">Negative regulator of class I heat shock genes (grpE-dnaK-dnaJ and groELS operons). Prevents heat-shock induction of these operons.</text>
</comment>
<comment type="similarity">
    <text evidence="1">Belongs to the HrcA family.</text>
</comment>